<name>ASSY_BORBR</name>
<protein>
    <recommendedName>
        <fullName evidence="1">Argininosuccinate synthase</fullName>
        <ecNumber evidence="1">6.3.4.5</ecNumber>
    </recommendedName>
    <alternativeName>
        <fullName evidence="1">Citrulline--aspartate ligase</fullName>
    </alternativeName>
</protein>
<proteinExistence type="inferred from homology"/>
<reference key="1">
    <citation type="journal article" date="2003" name="Nat. Genet.">
        <title>Comparative analysis of the genome sequences of Bordetella pertussis, Bordetella parapertussis and Bordetella bronchiseptica.</title>
        <authorList>
            <person name="Parkhill J."/>
            <person name="Sebaihia M."/>
            <person name="Preston A."/>
            <person name="Murphy L.D."/>
            <person name="Thomson N.R."/>
            <person name="Harris D.E."/>
            <person name="Holden M.T.G."/>
            <person name="Churcher C.M."/>
            <person name="Bentley S.D."/>
            <person name="Mungall K.L."/>
            <person name="Cerdeno-Tarraga A.-M."/>
            <person name="Temple L."/>
            <person name="James K.D."/>
            <person name="Harris B."/>
            <person name="Quail M.A."/>
            <person name="Achtman M."/>
            <person name="Atkin R."/>
            <person name="Baker S."/>
            <person name="Basham D."/>
            <person name="Bason N."/>
            <person name="Cherevach I."/>
            <person name="Chillingworth T."/>
            <person name="Collins M."/>
            <person name="Cronin A."/>
            <person name="Davis P."/>
            <person name="Doggett J."/>
            <person name="Feltwell T."/>
            <person name="Goble A."/>
            <person name="Hamlin N."/>
            <person name="Hauser H."/>
            <person name="Holroyd S."/>
            <person name="Jagels K."/>
            <person name="Leather S."/>
            <person name="Moule S."/>
            <person name="Norberczak H."/>
            <person name="O'Neil S."/>
            <person name="Ormond D."/>
            <person name="Price C."/>
            <person name="Rabbinowitsch E."/>
            <person name="Rutter S."/>
            <person name="Sanders M."/>
            <person name="Saunders D."/>
            <person name="Seeger K."/>
            <person name="Sharp S."/>
            <person name="Simmonds M."/>
            <person name="Skelton J."/>
            <person name="Squares R."/>
            <person name="Squares S."/>
            <person name="Stevens K."/>
            <person name="Unwin L."/>
            <person name="Whitehead S."/>
            <person name="Barrell B.G."/>
            <person name="Maskell D.J."/>
        </authorList>
    </citation>
    <scope>NUCLEOTIDE SEQUENCE [LARGE SCALE GENOMIC DNA]</scope>
    <source>
        <strain>ATCC BAA-588 / NCTC 13252 / RB50</strain>
    </source>
</reference>
<gene>
    <name evidence="1" type="primary">argG</name>
    <name type="ordered locus">BB1986</name>
</gene>
<organism>
    <name type="scientific">Bordetella bronchiseptica (strain ATCC BAA-588 / NCTC 13252 / RB50)</name>
    <name type="common">Alcaligenes bronchisepticus</name>
    <dbReference type="NCBI Taxonomy" id="257310"/>
    <lineage>
        <taxon>Bacteria</taxon>
        <taxon>Pseudomonadati</taxon>
        <taxon>Pseudomonadota</taxon>
        <taxon>Betaproteobacteria</taxon>
        <taxon>Burkholderiales</taxon>
        <taxon>Alcaligenaceae</taxon>
        <taxon>Bordetella</taxon>
    </lineage>
</organism>
<keyword id="KW-0028">Amino-acid biosynthesis</keyword>
<keyword id="KW-0055">Arginine biosynthesis</keyword>
<keyword id="KW-0067">ATP-binding</keyword>
<keyword id="KW-0963">Cytoplasm</keyword>
<keyword id="KW-0436">Ligase</keyword>
<keyword id="KW-0547">Nucleotide-binding</keyword>
<dbReference type="EC" id="6.3.4.5" evidence="1"/>
<dbReference type="EMBL" id="BX640443">
    <property type="protein sequence ID" value="CAE32483.1"/>
    <property type="molecule type" value="Genomic_DNA"/>
</dbReference>
<dbReference type="RefSeq" id="WP_003812940.1">
    <property type="nucleotide sequence ID" value="NC_002927.3"/>
</dbReference>
<dbReference type="SMR" id="Q7WKW7"/>
<dbReference type="GeneID" id="93204328"/>
<dbReference type="KEGG" id="bbr:BB1986"/>
<dbReference type="eggNOG" id="COG0137">
    <property type="taxonomic scope" value="Bacteria"/>
</dbReference>
<dbReference type="HOGENOM" id="CLU_032784_4_1_4"/>
<dbReference type="UniPathway" id="UPA00068">
    <property type="reaction ID" value="UER00113"/>
</dbReference>
<dbReference type="Proteomes" id="UP000001027">
    <property type="component" value="Chromosome"/>
</dbReference>
<dbReference type="GO" id="GO:0005737">
    <property type="term" value="C:cytoplasm"/>
    <property type="evidence" value="ECO:0007669"/>
    <property type="project" value="UniProtKB-SubCell"/>
</dbReference>
<dbReference type="GO" id="GO:0004055">
    <property type="term" value="F:argininosuccinate synthase activity"/>
    <property type="evidence" value="ECO:0007669"/>
    <property type="project" value="UniProtKB-UniRule"/>
</dbReference>
<dbReference type="GO" id="GO:0005524">
    <property type="term" value="F:ATP binding"/>
    <property type="evidence" value="ECO:0007669"/>
    <property type="project" value="UniProtKB-UniRule"/>
</dbReference>
<dbReference type="GO" id="GO:0042803">
    <property type="term" value="F:protein homodimerization activity"/>
    <property type="evidence" value="ECO:0007669"/>
    <property type="project" value="InterPro"/>
</dbReference>
<dbReference type="GO" id="GO:0000053">
    <property type="term" value="P:argininosuccinate metabolic process"/>
    <property type="evidence" value="ECO:0007669"/>
    <property type="project" value="TreeGrafter"/>
</dbReference>
<dbReference type="GO" id="GO:0006526">
    <property type="term" value="P:L-arginine biosynthetic process"/>
    <property type="evidence" value="ECO:0007669"/>
    <property type="project" value="UniProtKB-UniRule"/>
</dbReference>
<dbReference type="GO" id="GO:0000050">
    <property type="term" value="P:urea cycle"/>
    <property type="evidence" value="ECO:0007669"/>
    <property type="project" value="TreeGrafter"/>
</dbReference>
<dbReference type="CDD" id="cd01999">
    <property type="entry name" value="ASS"/>
    <property type="match status" value="1"/>
</dbReference>
<dbReference type="FunFam" id="1.10.287.400:FF:000001">
    <property type="entry name" value="Argininosuccinate synthase"/>
    <property type="match status" value="1"/>
</dbReference>
<dbReference type="Gene3D" id="1.10.287.400">
    <property type="match status" value="1"/>
</dbReference>
<dbReference type="Gene3D" id="3.90.1260.10">
    <property type="entry name" value="Argininosuccinate synthetase, chain A, domain 2"/>
    <property type="match status" value="1"/>
</dbReference>
<dbReference type="Gene3D" id="3.40.50.620">
    <property type="entry name" value="HUPs"/>
    <property type="match status" value="1"/>
</dbReference>
<dbReference type="HAMAP" id="MF_00581">
    <property type="entry name" value="Arg_succ_synth_type2"/>
    <property type="match status" value="1"/>
</dbReference>
<dbReference type="InterPro" id="IPR023437">
    <property type="entry name" value="Arg_succ_synth_type2_subfam"/>
</dbReference>
<dbReference type="InterPro" id="IPR048268">
    <property type="entry name" value="Arginosuc_syn_C"/>
</dbReference>
<dbReference type="InterPro" id="IPR048267">
    <property type="entry name" value="Arginosuc_syn_N"/>
</dbReference>
<dbReference type="InterPro" id="IPR001518">
    <property type="entry name" value="Arginosuc_synth"/>
</dbReference>
<dbReference type="InterPro" id="IPR018223">
    <property type="entry name" value="Arginosuc_synth_CS"/>
</dbReference>
<dbReference type="InterPro" id="IPR023434">
    <property type="entry name" value="Arginosuc_synth_type_1_subfam"/>
</dbReference>
<dbReference type="InterPro" id="IPR024074">
    <property type="entry name" value="AS_cat/multimer_dom_body"/>
</dbReference>
<dbReference type="InterPro" id="IPR024073">
    <property type="entry name" value="AS_multimer_C_tail"/>
</dbReference>
<dbReference type="InterPro" id="IPR014729">
    <property type="entry name" value="Rossmann-like_a/b/a_fold"/>
</dbReference>
<dbReference type="NCBIfam" id="TIGR00032">
    <property type="entry name" value="argG"/>
    <property type="match status" value="1"/>
</dbReference>
<dbReference type="NCBIfam" id="NF003779">
    <property type="entry name" value="PRK05370.1"/>
    <property type="match status" value="1"/>
</dbReference>
<dbReference type="PANTHER" id="PTHR11587">
    <property type="entry name" value="ARGININOSUCCINATE SYNTHASE"/>
    <property type="match status" value="1"/>
</dbReference>
<dbReference type="PANTHER" id="PTHR11587:SF2">
    <property type="entry name" value="ARGININOSUCCINATE SYNTHASE"/>
    <property type="match status" value="1"/>
</dbReference>
<dbReference type="Pfam" id="PF20979">
    <property type="entry name" value="Arginosuc_syn_C"/>
    <property type="match status" value="1"/>
</dbReference>
<dbReference type="Pfam" id="PF00764">
    <property type="entry name" value="Arginosuc_synth"/>
    <property type="match status" value="1"/>
</dbReference>
<dbReference type="SUPFAM" id="SSF52402">
    <property type="entry name" value="Adenine nucleotide alpha hydrolases-like"/>
    <property type="match status" value="1"/>
</dbReference>
<dbReference type="SUPFAM" id="SSF69864">
    <property type="entry name" value="Argininosuccinate synthetase, C-terminal domain"/>
    <property type="match status" value="1"/>
</dbReference>
<dbReference type="PROSITE" id="PS00564">
    <property type="entry name" value="ARGININOSUCCIN_SYN_1"/>
    <property type="match status" value="1"/>
</dbReference>
<dbReference type="PROSITE" id="PS00565">
    <property type="entry name" value="ARGININOSUCCIN_SYN_2"/>
    <property type="match status" value="1"/>
</dbReference>
<feature type="chain" id="PRO_0000148690" description="Argininosuccinate synthase">
    <location>
        <begin position="1"/>
        <end position="445"/>
    </location>
</feature>
<feature type="binding site" evidence="1">
    <location>
        <begin position="17"/>
        <end position="25"/>
    </location>
    <ligand>
        <name>ATP</name>
        <dbReference type="ChEBI" id="CHEBI:30616"/>
    </ligand>
</feature>
<feature type="binding site" evidence="1">
    <location>
        <position position="43"/>
    </location>
    <ligand>
        <name>ATP</name>
        <dbReference type="ChEBI" id="CHEBI:30616"/>
    </ligand>
</feature>
<feature type="binding site" evidence="1">
    <location>
        <position position="99"/>
    </location>
    <ligand>
        <name>L-citrulline</name>
        <dbReference type="ChEBI" id="CHEBI:57743"/>
    </ligand>
</feature>
<feature type="binding site" evidence="1">
    <location>
        <position position="129"/>
    </location>
    <ligand>
        <name>ATP</name>
        <dbReference type="ChEBI" id="CHEBI:30616"/>
    </ligand>
</feature>
<feature type="binding site" evidence="1">
    <location>
        <position position="131"/>
    </location>
    <ligand>
        <name>ATP</name>
        <dbReference type="ChEBI" id="CHEBI:30616"/>
    </ligand>
</feature>
<feature type="binding site" evidence="1">
    <location>
        <position position="131"/>
    </location>
    <ligand>
        <name>L-aspartate</name>
        <dbReference type="ChEBI" id="CHEBI:29991"/>
    </ligand>
</feature>
<feature type="binding site" evidence="1">
    <location>
        <position position="135"/>
    </location>
    <ligand>
        <name>L-aspartate</name>
        <dbReference type="ChEBI" id="CHEBI:29991"/>
    </ligand>
</feature>
<feature type="binding site" evidence="1">
    <location>
        <position position="135"/>
    </location>
    <ligand>
        <name>L-citrulline</name>
        <dbReference type="ChEBI" id="CHEBI:57743"/>
    </ligand>
</feature>
<feature type="binding site" evidence="1">
    <location>
        <position position="136"/>
    </location>
    <ligand>
        <name>ATP</name>
        <dbReference type="ChEBI" id="CHEBI:30616"/>
    </ligand>
</feature>
<feature type="binding site" evidence="1">
    <location>
        <position position="136"/>
    </location>
    <ligand>
        <name>L-aspartate</name>
        <dbReference type="ChEBI" id="CHEBI:29991"/>
    </ligand>
</feature>
<feature type="binding site" evidence="1">
    <location>
        <position position="139"/>
    </location>
    <ligand>
        <name>L-citrulline</name>
        <dbReference type="ChEBI" id="CHEBI:57743"/>
    </ligand>
</feature>
<feature type="binding site" evidence="1">
    <location>
        <position position="192"/>
    </location>
    <ligand>
        <name>L-citrulline</name>
        <dbReference type="ChEBI" id="CHEBI:57743"/>
    </ligand>
</feature>
<feature type="binding site" evidence="1">
    <location>
        <position position="194"/>
    </location>
    <ligand>
        <name>ATP</name>
        <dbReference type="ChEBI" id="CHEBI:30616"/>
    </ligand>
</feature>
<feature type="binding site" evidence="1">
    <location>
        <position position="201"/>
    </location>
    <ligand>
        <name>L-citrulline</name>
        <dbReference type="ChEBI" id="CHEBI:57743"/>
    </ligand>
</feature>
<feature type="binding site" evidence="1">
    <location>
        <position position="203"/>
    </location>
    <ligand>
        <name>L-citrulline</name>
        <dbReference type="ChEBI" id="CHEBI:57743"/>
    </ligand>
</feature>
<feature type="binding site" evidence="1">
    <location>
        <position position="280"/>
    </location>
    <ligand>
        <name>L-citrulline</name>
        <dbReference type="ChEBI" id="CHEBI:57743"/>
    </ligand>
</feature>
<comment type="catalytic activity">
    <reaction evidence="1">
        <text>L-citrulline + L-aspartate + ATP = 2-(N(omega)-L-arginino)succinate + AMP + diphosphate + H(+)</text>
        <dbReference type="Rhea" id="RHEA:10932"/>
        <dbReference type="ChEBI" id="CHEBI:15378"/>
        <dbReference type="ChEBI" id="CHEBI:29991"/>
        <dbReference type="ChEBI" id="CHEBI:30616"/>
        <dbReference type="ChEBI" id="CHEBI:33019"/>
        <dbReference type="ChEBI" id="CHEBI:57472"/>
        <dbReference type="ChEBI" id="CHEBI:57743"/>
        <dbReference type="ChEBI" id="CHEBI:456215"/>
        <dbReference type="EC" id="6.3.4.5"/>
    </reaction>
</comment>
<comment type="pathway">
    <text evidence="1">Amino-acid biosynthesis; L-arginine biosynthesis; L-arginine from L-ornithine and carbamoyl phosphate: step 2/3.</text>
</comment>
<comment type="subunit">
    <text evidence="1">Homotetramer.</text>
</comment>
<comment type="subcellular location">
    <subcellularLocation>
        <location evidence="1">Cytoplasm</location>
    </subcellularLocation>
</comment>
<comment type="similarity">
    <text evidence="1">Belongs to the argininosuccinate synthase family. Type 2 subfamily.</text>
</comment>
<sequence>MTTILPNLPTGQKVGIAFSGGLDTSAALLWMRQKGAVPYAYTANLGQPDEPDYDEIPRRAMQYGAEAARLVDCRAQLVAEGIAALQAGAFHISTAGLTYFNTTPIGRAVTGTMLVAAMKEDGVNIWGDGSTFKGNDIERFYRYGLLTNPDLKIYKPWLDQTFIDELGGRAEMSEYMRQAGFDYKMSAEKAYSTDSNMLGATHEAKDLELLNSGIRIVQPIMGVAFWQDSVQIKAEEVTVRFEEGQPVALNGVEYADPVELLLEANRIGGRHGLGMSDQIENRIIEAKSRGIYEAPGLALLFIAYERLVTGIHNEDTIEQYRENGRKLGRLLYQGRWFDPQAIMLRETAQRWVARAITGEVTLELRRGNDYSLLNTESANLTYAPERLSMEKVENAPFTPADRIGQLTMRNLDIVDTREKLFTYVKTGLLAPSAGSALPQIKDGKK</sequence>
<evidence type="ECO:0000255" key="1">
    <source>
        <dbReference type="HAMAP-Rule" id="MF_00581"/>
    </source>
</evidence>
<accession>Q7WKW7</accession>